<keyword id="KW-0963">Cytoplasm</keyword>
<keyword id="KW-0396">Initiation factor</keyword>
<keyword id="KW-0648">Protein biosynthesis</keyword>
<keyword id="KW-0694">RNA-binding</keyword>
<keyword id="KW-0699">rRNA-binding</keyword>
<dbReference type="EMBL" id="CP000726">
    <property type="protein sequence ID" value="ABS33031.1"/>
    <property type="molecule type" value="Genomic_DNA"/>
</dbReference>
<dbReference type="RefSeq" id="WP_003357316.1">
    <property type="nucleotide sequence ID" value="NC_009697.1"/>
</dbReference>
<dbReference type="SMR" id="A7FZ49"/>
<dbReference type="GeneID" id="92940226"/>
<dbReference type="KEGG" id="cba:CLB_3513"/>
<dbReference type="HOGENOM" id="CLU_151267_1_0_9"/>
<dbReference type="GO" id="GO:0005829">
    <property type="term" value="C:cytosol"/>
    <property type="evidence" value="ECO:0007669"/>
    <property type="project" value="TreeGrafter"/>
</dbReference>
<dbReference type="GO" id="GO:0043022">
    <property type="term" value="F:ribosome binding"/>
    <property type="evidence" value="ECO:0007669"/>
    <property type="project" value="UniProtKB-UniRule"/>
</dbReference>
<dbReference type="GO" id="GO:0019843">
    <property type="term" value="F:rRNA binding"/>
    <property type="evidence" value="ECO:0007669"/>
    <property type="project" value="UniProtKB-UniRule"/>
</dbReference>
<dbReference type="GO" id="GO:0003743">
    <property type="term" value="F:translation initiation factor activity"/>
    <property type="evidence" value="ECO:0007669"/>
    <property type="project" value="UniProtKB-UniRule"/>
</dbReference>
<dbReference type="CDD" id="cd04451">
    <property type="entry name" value="S1_IF1"/>
    <property type="match status" value="1"/>
</dbReference>
<dbReference type="FunFam" id="2.40.50.140:FF:000002">
    <property type="entry name" value="Translation initiation factor IF-1"/>
    <property type="match status" value="1"/>
</dbReference>
<dbReference type="Gene3D" id="2.40.50.140">
    <property type="entry name" value="Nucleic acid-binding proteins"/>
    <property type="match status" value="1"/>
</dbReference>
<dbReference type="HAMAP" id="MF_00075">
    <property type="entry name" value="IF_1"/>
    <property type="match status" value="1"/>
</dbReference>
<dbReference type="InterPro" id="IPR012340">
    <property type="entry name" value="NA-bd_OB-fold"/>
</dbReference>
<dbReference type="InterPro" id="IPR006196">
    <property type="entry name" value="RNA-binding_domain_S1_IF1"/>
</dbReference>
<dbReference type="InterPro" id="IPR003029">
    <property type="entry name" value="S1_domain"/>
</dbReference>
<dbReference type="InterPro" id="IPR004368">
    <property type="entry name" value="TIF_IF1"/>
</dbReference>
<dbReference type="NCBIfam" id="TIGR00008">
    <property type="entry name" value="infA"/>
    <property type="match status" value="1"/>
</dbReference>
<dbReference type="PANTHER" id="PTHR33370">
    <property type="entry name" value="TRANSLATION INITIATION FACTOR IF-1, CHLOROPLASTIC"/>
    <property type="match status" value="1"/>
</dbReference>
<dbReference type="PANTHER" id="PTHR33370:SF1">
    <property type="entry name" value="TRANSLATION INITIATION FACTOR IF-1, CHLOROPLASTIC"/>
    <property type="match status" value="1"/>
</dbReference>
<dbReference type="Pfam" id="PF01176">
    <property type="entry name" value="eIF-1a"/>
    <property type="match status" value="1"/>
</dbReference>
<dbReference type="SMART" id="SM00316">
    <property type="entry name" value="S1"/>
    <property type="match status" value="1"/>
</dbReference>
<dbReference type="SUPFAM" id="SSF50249">
    <property type="entry name" value="Nucleic acid-binding proteins"/>
    <property type="match status" value="1"/>
</dbReference>
<dbReference type="PROSITE" id="PS50832">
    <property type="entry name" value="S1_IF1_TYPE"/>
    <property type="match status" value="1"/>
</dbReference>
<protein>
    <recommendedName>
        <fullName evidence="1">Translation initiation factor IF-1</fullName>
    </recommendedName>
</protein>
<organism>
    <name type="scientific">Clostridium botulinum (strain ATCC 19397 / Type A)</name>
    <dbReference type="NCBI Taxonomy" id="441770"/>
    <lineage>
        <taxon>Bacteria</taxon>
        <taxon>Bacillati</taxon>
        <taxon>Bacillota</taxon>
        <taxon>Clostridia</taxon>
        <taxon>Eubacteriales</taxon>
        <taxon>Clostridiaceae</taxon>
        <taxon>Clostridium</taxon>
    </lineage>
</organism>
<gene>
    <name evidence="1" type="primary">infA</name>
    <name type="ordered locus">CLB_3513</name>
</gene>
<feature type="chain" id="PRO_0000338803" description="Translation initiation factor IF-1">
    <location>
        <begin position="1"/>
        <end position="72"/>
    </location>
</feature>
<feature type="domain" description="S1-like" evidence="1">
    <location>
        <begin position="1"/>
        <end position="72"/>
    </location>
</feature>
<evidence type="ECO:0000255" key="1">
    <source>
        <dbReference type="HAMAP-Rule" id="MF_00075"/>
    </source>
</evidence>
<proteinExistence type="inferred from homology"/>
<comment type="function">
    <text evidence="1">One of the essential components for the initiation of protein synthesis. Stabilizes the binding of IF-2 and IF-3 on the 30S subunit to which N-formylmethionyl-tRNA(fMet) subsequently binds. Helps modulate mRNA selection, yielding the 30S pre-initiation complex (PIC). Upon addition of the 50S ribosomal subunit IF-1, IF-2 and IF-3 are released leaving the mature 70S translation initiation complex.</text>
</comment>
<comment type="subunit">
    <text evidence="1">Component of the 30S ribosomal translation pre-initiation complex which assembles on the 30S ribosome in the order IF-2 and IF-3, IF-1 and N-formylmethionyl-tRNA(fMet); mRNA recruitment can occur at any time during PIC assembly.</text>
</comment>
<comment type="subcellular location">
    <subcellularLocation>
        <location evidence="1">Cytoplasm</location>
    </subcellularLocation>
</comment>
<comment type="similarity">
    <text evidence="1">Belongs to the IF-1 family.</text>
</comment>
<sequence length="72" mass="8184">MSKDDVIEMQGTVLESLPNAMFEVELESGHKIIAHISGKLRMNFIRILPGDKVTVELSPYDLTRGRITWRAK</sequence>
<name>IF1_CLOB1</name>
<accession>A7FZ49</accession>
<reference key="1">
    <citation type="journal article" date="2007" name="PLoS ONE">
        <title>Analysis of the neurotoxin complex genes in Clostridium botulinum A1-A4 and B1 strains: BoNT/A3, /Ba4 and /B1 clusters are located within plasmids.</title>
        <authorList>
            <person name="Smith T.J."/>
            <person name="Hill K.K."/>
            <person name="Foley B.T."/>
            <person name="Detter J.C."/>
            <person name="Munk A.C."/>
            <person name="Bruce D.C."/>
            <person name="Doggett N.A."/>
            <person name="Smith L.A."/>
            <person name="Marks J.D."/>
            <person name="Xie G."/>
            <person name="Brettin T.S."/>
        </authorList>
    </citation>
    <scope>NUCLEOTIDE SEQUENCE [LARGE SCALE GENOMIC DNA]</scope>
    <source>
        <strain>ATCC 19397 / Type A</strain>
    </source>
</reference>